<comment type="function">
    <text evidence="1">One of the primary rRNA binding proteins, it binds directly to 16S rRNA where it helps nucleate assembly of the platform of the 30S subunit by binding and bridging several RNA helices of the 16S rRNA.</text>
</comment>
<comment type="function">
    <text evidence="1">Forms an intersubunit bridge (bridge B4) with the 23S rRNA of the 50S subunit in the ribosome.</text>
</comment>
<comment type="subunit">
    <text evidence="1">Part of the 30S ribosomal subunit. Forms a bridge to the 50S subunit in the 70S ribosome, contacting the 23S rRNA.</text>
</comment>
<comment type="similarity">
    <text evidence="1">Belongs to the universal ribosomal protein uS15 family.</text>
</comment>
<evidence type="ECO:0000255" key="1">
    <source>
        <dbReference type="HAMAP-Rule" id="MF_01343"/>
    </source>
</evidence>
<evidence type="ECO:0000305" key="2"/>
<dbReference type="EMBL" id="CP000860">
    <property type="protein sequence ID" value="ACA59446.1"/>
    <property type="molecule type" value="Genomic_DNA"/>
</dbReference>
<dbReference type="RefSeq" id="WP_012302032.1">
    <property type="nucleotide sequence ID" value="NC_010424.1"/>
</dbReference>
<dbReference type="SMR" id="B1I392"/>
<dbReference type="STRING" id="477974.Daud_0933"/>
<dbReference type="KEGG" id="dau:Daud_0933"/>
<dbReference type="eggNOG" id="COG0184">
    <property type="taxonomic scope" value="Bacteria"/>
</dbReference>
<dbReference type="HOGENOM" id="CLU_148518_0_0_9"/>
<dbReference type="OrthoDB" id="9799262at2"/>
<dbReference type="Proteomes" id="UP000008544">
    <property type="component" value="Chromosome"/>
</dbReference>
<dbReference type="GO" id="GO:0022627">
    <property type="term" value="C:cytosolic small ribosomal subunit"/>
    <property type="evidence" value="ECO:0007669"/>
    <property type="project" value="TreeGrafter"/>
</dbReference>
<dbReference type="GO" id="GO:0019843">
    <property type="term" value="F:rRNA binding"/>
    <property type="evidence" value="ECO:0007669"/>
    <property type="project" value="UniProtKB-UniRule"/>
</dbReference>
<dbReference type="GO" id="GO:0003735">
    <property type="term" value="F:structural constituent of ribosome"/>
    <property type="evidence" value="ECO:0007669"/>
    <property type="project" value="InterPro"/>
</dbReference>
<dbReference type="GO" id="GO:0006412">
    <property type="term" value="P:translation"/>
    <property type="evidence" value="ECO:0007669"/>
    <property type="project" value="UniProtKB-UniRule"/>
</dbReference>
<dbReference type="CDD" id="cd00353">
    <property type="entry name" value="Ribosomal_S15p_S13e"/>
    <property type="match status" value="1"/>
</dbReference>
<dbReference type="FunFam" id="1.10.287.10:FF:000002">
    <property type="entry name" value="30S ribosomal protein S15"/>
    <property type="match status" value="1"/>
</dbReference>
<dbReference type="Gene3D" id="6.10.250.3130">
    <property type="match status" value="1"/>
</dbReference>
<dbReference type="Gene3D" id="1.10.287.10">
    <property type="entry name" value="S15/NS1, RNA-binding"/>
    <property type="match status" value="1"/>
</dbReference>
<dbReference type="HAMAP" id="MF_01343_B">
    <property type="entry name" value="Ribosomal_uS15_B"/>
    <property type="match status" value="1"/>
</dbReference>
<dbReference type="InterPro" id="IPR000589">
    <property type="entry name" value="Ribosomal_uS15"/>
</dbReference>
<dbReference type="InterPro" id="IPR005290">
    <property type="entry name" value="Ribosomal_uS15_bac-type"/>
</dbReference>
<dbReference type="InterPro" id="IPR009068">
    <property type="entry name" value="uS15_NS1_RNA-bd_sf"/>
</dbReference>
<dbReference type="NCBIfam" id="TIGR00952">
    <property type="entry name" value="S15_bact"/>
    <property type="match status" value="1"/>
</dbReference>
<dbReference type="PANTHER" id="PTHR23321">
    <property type="entry name" value="RIBOSOMAL PROTEIN S15, BACTERIAL AND ORGANELLAR"/>
    <property type="match status" value="1"/>
</dbReference>
<dbReference type="PANTHER" id="PTHR23321:SF26">
    <property type="entry name" value="SMALL RIBOSOMAL SUBUNIT PROTEIN US15M"/>
    <property type="match status" value="1"/>
</dbReference>
<dbReference type="Pfam" id="PF00312">
    <property type="entry name" value="Ribosomal_S15"/>
    <property type="match status" value="1"/>
</dbReference>
<dbReference type="SMART" id="SM01387">
    <property type="entry name" value="Ribosomal_S15"/>
    <property type="match status" value="1"/>
</dbReference>
<dbReference type="SUPFAM" id="SSF47060">
    <property type="entry name" value="S15/NS1 RNA-binding domain"/>
    <property type="match status" value="1"/>
</dbReference>
<dbReference type="PROSITE" id="PS00362">
    <property type="entry name" value="RIBOSOMAL_S15"/>
    <property type="match status" value="1"/>
</dbReference>
<gene>
    <name evidence="1" type="primary">rpsO</name>
    <name type="ordered locus">Daud_0933</name>
</gene>
<name>RS15_DESAP</name>
<organism>
    <name type="scientific">Desulforudis audaxviator (strain MP104C)</name>
    <dbReference type="NCBI Taxonomy" id="477974"/>
    <lineage>
        <taxon>Bacteria</taxon>
        <taxon>Bacillati</taxon>
        <taxon>Bacillota</taxon>
        <taxon>Clostridia</taxon>
        <taxon>Thermoanaerobacterales</taxon>
        <taxon>Candidatus Desulforudaceae</taxon>
        <taxon>Candidatus Desulforudis</taxon>
    </lineage>
</organism>
<proteinExistence type="inferred from homology"/>
<sequence>MTLSADKKQPIIDKFKLHENDTGSPEVQVAILTERINLLTEHLKTHRKDFHSRRGLLKMVGQRRALLNYLRDRAPDRYRKLIQELGLRK</sequence>
<keyword id="KW-1185">Reference proteome</keyword>
<keyword id="KW-0687">Ribonucleoprotein</keyword>
<keyword id="KW-0689">Ribosomal protein</keyword>
<keyword id="KW-0694">RNA-binding</keyword>
<keyword id="KW-0699">rRNA-binding</keyword>
<reference key="1">
    <citation type="submission" date="2007-10" db="EMBL/GenBank/DDBJ databases">
        <title>Complete sequence of chromosome of Desulforudis audaxviator MP104C.</title>
        <authorList>
            <person name="Copeland A."/>
            <person name="Lucas S."/>
            <person name="Lapidus A."/>
            <person name="Barry K."/>
            <person name="Glavina del Rio T."/>
            <person name="Dalin E."/>
            <person name="Tice H."/>
            <person name="Bruce D."/>
            <person name="Pitluck S."/>
            <person name="Lowry S.R."/>
            <person name="Larimer F."/>
            <person name="Land M.L."/>
            <person name="Hauser L."/>
            <person name="Kyrpides N."/>
            <person name="Ivanova N.N."/>
            <person name="Richardson P."/>
        </authorList>
    </citation>
    <scope>NUCLEOTIDE SEQUENCE [LARGE SCALE GENOMIC DNA]</scope>
    <source>
        <strain>MP104C</strain>
    </source>
</reference>
<accession>B1I392</accession>
<feature type="chain" id="PRO_0000354196" description="Small ribosomal subunit protein uS15">
    <location>
        <begin position="1"/>
        <end position="89"/>
    </location>
</feature>
<protein>
    <recommendedName>
        <fullName evidence="1">Small ribosomal subunit protein uS15</fullName>
    </recommendedName>
    <alternativeName>
        <fullName evidence="2">30S ribosomal protein S15</fullName>
    </alternativeName>
</protein>